<gene>
    <name type="ordered locus">NSE_0881</name>
</gene>
<dbReference type="EC" id="3.6.1.9" evidence="1"/>
<dbReference type="EMBL" id="CP000237">
    <property type="protein sequence ID" value="ABD45846.1"/>
    <property type="molecule type" value="Genomic_DNA"/>
</dbReference>
<dbReference type="SMR" id="Q2GCP9"/>
<dbReference type="STRING" id="222891.NSE_0881"/>
<dbReference type="KEGG" id="nse:NSE_0881"/>
<dbReference type="eggNOG" id="COG0424">
    <property type="taxonomic scope" value="Bacteria"/>
</dbReference>
<dbReference type="HOGENOM" id="CLU_040416_2_0_5"/>
<dbReference type="Proteomes" id="UP000001942">
    <property type="component" value="Chromosome"/>
</dbReference>
<dbReference type="GO" id="GO:0005737">
    <property type="term" value="C:cytoplasm"/>
    <property type="evidence" value="ECO:0007669"/>
    <property type="project" value="UniProtKB-SubCell"/>
</dbReference>
<dbReference type="GO" id="GO:0047429">
    <property type="term" value="F:nucleoside triphosphate diphosphatase activity"/>
    <property type="evidence" value="ECO:0007669"/>
    <property type="project" value="UniProtKB-EC"/>
</dbReference>
<dbReference type="GO" id="GO:0009117">
    <property type="term" value="P:nucleotide metabolic process"/>
    <property type="evidence" value="ECO:0007669"/>
    <property type="project" value="UniProtKB-KW"/>
</dbReference>
<dbReference type="CDD" id="cd00555">
    <property type="entry name" value="Maf"/>
    <property type="match status" value="1"/>
</dbReference>
<dbReference type="Gene3D" id="3.90.950.10">
    <property type="match status" value="1"/>
</dbReference>
<dbReference type="HAMAP" id="MF_00528">
    <property type="entry name" value="Maf"/>
    <property type="match status" value="1"/>
</dbReference>
<dbReference type="InterPro" id="IPR029001">
    <property type="entry name" value="ITPase-like_fam"/>
</dbReference>
<dbReference type="InterPro" id="IPR003697">
    <property type="entry name" value="Maf-like"/>
</dbReference>
<dbReference type="PANTHER" id="PTHR43213">
    <property type="entry name" value="BIFUNCTIONAL DTTP/UTP PYROPHOSPHATASE/METHYLTRANSFERASE PROTEIN-RELATED"/>
    <property type="match status" value="1"/>
</dbReference>
<dbReference type="PANTHER" id="PTHR43213:SF5">
    <property type="entry name" value="BIFUNCTIONAL DTTP_UTP PYROPHOSPHATASE_METHYLTRANSFERASE PROTEIN-RELATED"/>
    <property type="match status" value="1"/>
</dbReference>
<dbReference type="Pfam" id="PF02545">
    <property type="entry name" value="Maf"/>
    <property type="match status" value="1"/>
</dbReference>
<dbReference type="PIRSF" id="PIRSF006305">
    <property type="entry name" value="Maf"/>
    <property type="match status" value="1"/>
</dbReference>
<dbReference type="SUPFAM" id="SSF52972">
    <property type="entry name" value="ITPase-like"/>
    <property type="match status" value="1"/>
</dbReference>
<reference key="1">
    <citation type="journal article" date="2006" name="PLoS Genet.">
        <title>Comparative genomics of emerging human ehrlichiosis agents.</title>
        <authorList>
            <person name="Dunning Hotopp J.C."/>
            <person name="Lin M."/>
            <person name="Madupu R."/>
            <person name="Crabtree J."/>
            <person name="Angiuoli S.V."/>
            <person name="Eisen J.A."/>
            <person name="Seshadri R."/>
            <person name="Ren Q."/>
            <person name="Wu M."/>
            <person name="Utterback T.R."/>
            <person name="Smith S."/>
            <person name="Lewis M."/>
            <person name="Khouri H."/>
            <person name="Zhang C."/>
            <person name="Niu H."/>
            <person name="Lin Q."/>
            <person name="Ohashi N."/>
            <person name="Zhi N."/>
            <person name="Nelson W.C."/>
            <person name="Brinkac L.M."/>
            <person name="Dodson R.J."/>
            <person name="Rosovitz M.J."/>
            <person name="Sundaram J.P."/>
            <person name="Daugherty S.C."/>
            <person name="Davidsen T."/>
            <person name="Durkin A.S."/>
            <person name="Gwinn M.L."/>
            <person name="Haft D.H."/>
            <person name="Selengut J.D."/>
            <person name="Sullivan S.A."/>
            <person name="Zafar N."/>
            <person name="Zhou L."/>
            <person name="Benahmed F."/>
            <person name="Forberger H."/>
            <person name="Halpin R."/>
            <person name="Mulligan S."/>
            <person name="Robinson J."/>
            <person name="White O."/>
            <person name="Rikihisa Y."/>
            <person name="Tettelin H."/>
        </authorList>
    </citation>
    <scope>NUCLEOTIDE SEQUENCE [LARGE SCALE GENOMIC DNA]</scope>
    <source>
        <strain>ATCC VR-367 / Miyayama</strain>
    </source>
</reference>
<organism>
    <name type="scientific">Neorickettsia sennetsu (strain ATCC VR-367 / Miyayama)</name>
    <name type="common">Ehrlichia sennetsu</name>
    <dbReference type="NCBI Taxonomy" id="222891"/>
    <lineage>
        <taxon>Bacteria</taxon>
        <taxon>Pseudomonadati</taxon>
        <taxon>Pseudomonadota</taxon>
        <taxon>Alphaproteobacteria</taxon>
        <taxon>Rickettsiales</taxon>
        <taxon>Anaplasmataceae</taxon>
        <taxon>Neorickettsia</taxon>
    </lineage>
</organism>
<sequence length="209" mass="23526">MCDMYSDFILGSSSKCRSQLLEVLGFFPKRSIGPEIDESPKKGELPLTYAKRMAYEKALKLKRVCHEENVITADTVASCGRRILPKACCDEDVRYCLEFLSGRRHRLYTSLCLVTKSGEVRQRTVMTVLKFKRLSNEEIEFYLATKEGIGKAGGYSIQGMAQGFVLFIRGSYFNVVGLPAYEVISLLRSVGVFQQSREALYSQGVKDAK</sequence>
<comment type="function">
    <text evidence="1">Nucleoside triphosphate pyrophosphatase. May have a dual role in cell division arrest and in preventing the incorporation of modified nucleotides into cellular nucleic acids.</text>
</comment>
<comment type="catalytic activity">
    <reaction evidence="1">
        <text>a ribonucleoside 5'-triphosphate + H2O = a ribonucleoside 5'-phosphate + diphosphate + H(+)</text>
        <dbReference type="Rhea" id="RHEA:23996"/>
        <dbReference type="ChEBI" id="CHEBI:15377"/>
        <dbReference type="ChEBI" id="CHEBI:15378"/>
        <dbReference type="ChEBI" id="CHEBI:33019"/>
        <dbReference type="ChEBI" id="CHEBI:58043"/>
        <dbReference type="ChEBI" id="CHEBI:61557"/>
        <dbReference type="EC" id="3.6.1.9"/>
    </reaction>
</comment>
<comment type="catalytic activity">
    <reaction evidence="1">
        <text>a 2'-deoxyribonucleoside 5'-triphosphate + H2O = a 2'-deoxyribonucleoside 5'-phosphate + diphosphate + H(+)</text>
        <dbReference type="Rhea" id="RHEA:44644"/>
        <dbReference type="ChEBI" id="CHEBI:15377"/>
        <dbReference type="ChEBI" id="CHEBI:15378"/>
        <dbReference type="ChEBI" id="CHEBI:33019"/>
        <dbReference type="ChEBI" id="CHEBI:61560"/>
        <dbReference type="ChEBI" id="CHEBI:65317"/>
        <dbReference type="EC" id="3.6.1.9"/>
    </reaction>
</comment>
<comment type="cofactor">
    <cofactor evidence="1">
        <name>a divalent metal cation</name>
        <dbReference type="ChEBI" id="CHEBI:60240"/>
    </cofactor>
</comment>
<comment type="subcellular location">
    <subcellularLocation>
        <location evidence="1">Cytoplasm</location>
    </subcellularLocation>
</comment>
<comment type="similarity">
    <text evidence="1">Belongs to the Maf family.</text>
</comment>
<evidence type="ECO:0000255" key="1">
    <source>
        <dbReference type="HAMAP-Rule" id="MF_00528"/>
    </source>
</evidence>
<protein>
    <recommendedName>
        <fullName evidence="1">Nucleoside triphosphate pyrophosphatase</fullName>
        <ecNumber evidence="1">3.6.1.9</ecNumber>
    </recommendedName>
    <alternativeName>
        <fullName evidence="1">Nucleotide pyrophosphatase</fullName>
        <shortName evidence="1">Nucleotide PPase</shortName>
    </alternativeName>
</protein>
<name>NTPP_NEOSM</name>
<accession>Q2GCP9</accession>
<feature type="chain" id="PRO_0000267350" description="Nucleoside triphosphate pyrophosphatase">
    <location>
        <begin position="1"/>
        <end position="209"/>
    </location>
</feature>
<feature type="active site" description="Proton acceptor" evidence="1">
    <location>
        <position position="74"/>
    </location>
</feature>
<proteinExistence type="inferred from homology"/>
<keyword id="KW-0963">Cytoplasm</keyword>
<keyword id="KW-0378">Hydrolase</keyword>
<keyword id="KW-0546">Nucleotide metabolism</keyword>